<accession>Q09349</accession>
<accession>Q6BEV4</accession>
<accession>Q95QB5</accession>
<evidence type="ECO:0000255" key="1">
    <source>
        <dbReference type="PROSITE-ProRule" id="PRU01034"/>
    </source>
</evidence>
<evidence type="ECO:0000269" key="2">
    <source>
    </source>
</evidence>
<evidence type="ECO:0000269" key="3">
    <source>
    </source>
</evidence>
<evidence type="ECO:0000269" key="4">
    <source>
    </source>
</evidence>
<evidence type="ECO:0000269" key="5">
    <source>
    </source>
</evidence>
<evidence type="ECO:0000269" key="6">
    <source>
    </source>
</evidence>
<evidence type="ECO:0000303" key="7">
    <source>
    </source>
</evidence>
<evidence type="ECO:0000305" key="8"/>
<evidence type="ECO:0000312" key="9">
    <source>
        <dbReference type="WormBase" id="T05H10.5a"/>
    </source>
</evidence>
<evidence type="ECO:0000312" key="10">
    <source>
        <dbReference type="WormBase" id="T05H10.5b"/>
    </source>
</evidence>
<evidence type="ECO:0000312" key="11">
    <source>
        <dbReference type="WormBase" id="T05H10.5c"/>
    </source>
</evidence>
<dbReference type="EC" id="2.3.2.27" evidence="2 5 6"/>
<dbReference type="EMBL" id="Z47812">
    <property type="protein sequence ID" value="CAA87792.1"/>
    <property type="molecule type" value="Genomic_DNA"/>
</dbReference>
<dbReference type="EMBL" id="BX284602">
    <property type="protein sequence ID" value="CAC70105.1"/>
    <property type="molecule type" value="Genomic_DNA"/>
</dbReference>
<dbReference type="EMBL" id="BX284602">
    <property type="protein sequence ID" value="CAH04720.1"/>
    <property type="molecule type" value="Genomic_DNA"/>
</dbReference>
<dbReference type="PIR" id="T24556">
    <property type="entry name" value="T24556"/>
</dbReference>
<dbReference type="RefSeq" id="NP_001022320.1">
    <molecule id="Q09349-4"/>
    <property type="nucleotide sequence ID" value="NM_001027149.5"/>
</dbReference>
<dbReference type="RefSeq" id="NP_001369867.1">
    <molecule id="Q09349-3"/>
    <property type="nucleotide sequence ID" value="NM_001383900.2"/>
</dbReference>
<dbReference type="RefSeq" id="NP_495691.1">
    <molecule id="Q09349-1"/>
    <property type="nucleotide sequence ID" value="NM_063290.3"/>
</dbReference>
<dbReference type="RefSeq" id="NP_495692.1">
    <property type="nucleotide sequence ID" value="NM_063291.3"/>
</dbReference>
<dbReference type="SMR" id="Q09349"/>
<dbReference type="BioGRID" id="39626">
    <property type="interactions" value="11"/>
</dbReference>
<dbReference type="DIP" id="DIP-25769N"/>
<dbReference type="FunCoup" id="Q09349">
    <property type="interactions" value="3928"/>
</dbReference>
<dbReference type="IntAct" id="Q09349">
    <property type="interactions" value="1"/>
</dbReference>
<dbReference type="STRING" id="6239.T05H10.5b.1"/>
<dbReference type="PaxDb" id="6239-T05H10.5b"/>
<dbReference type="PeptideAtlas" id="Q09349"/>
<dbReference type="EnsemblMetazoa" id="T05H10.5a.1">
    <molecule id="Q09349-3"/>
    <property type="protein sequence ID" value="T05H10.5a.1"/>
    <property type="gene ID" value="WBGene00006734"/>
</dbReference>
<dbReference type="EnsemblMetazoa" id="T05H10.5b.1">
    <molecule id="Q09349-1"/>
    <property type="protein sequence ID" value="T05H10.5b.1"/>
    <property type="gene ID" value="WBGene00006734"/>
</dbReference>
<dbReference type="EnsemblMetazoa" id="T05H10.5c.1">
    <molecule id="Q09349-4"/>
    <property type="protein sequence ID" value="T05H10.5c.1"/>
    <property type="gene ID" value="WBGene00006734"/>
</dbReference>
<dbReference type="GeneID" id="174295"/>
<dbReference type="KEGG" id="cel:CELE_T05H10.5"/>
<dbReference type="UCSC" id="T05H10.5a">
    <property type="organism name" value="c. elegans"/>
</dbReference>
<dbReference type="AGR" id="WB:WBGene00006734"/>
<dbReference type="CTD" id="174295"/>
<dbReference type="WormBase" id="T05H10.5a">
    <molecule id="Q09349-3"/>
    <property type="protein sequence ID" value="CE01642"/>
    <property type="gene ID" value="WBGene00006734"/>
    <property type="gene designation" value="ufd-2"/>
</dbReference>
<dbReference type="WormBase" id="T05H10.5b">
    <molecule id="Q09349-1"/>
    <property type="protein sequence ID" value="CE28868"/>
    <property type="gene ID" value="WBGene00006734"/>
    <property type="gene designation" value="ufd-2"/>
</dbReference>
<dbReference type="WormBase" id="T05H10.5c">
    <molecule id="Q09349-4"/>
    <property type="protein sequence ID" value="CE36948"/>
    <property type="gene ID" value="WBGene00006734"/>
    <property type="gene designation" value="ufd-2"/>
</dbReference>
<dbReference type="eggNOG" id="KOG2042">
    <property type="taxonomic scope" value="Eukaryota"/>
</dbReference>
<dbReference type="GeneTree" id="ENSGT00390000009300"/>
<dbReference type="HOGENOM" id="CLU_003224_2_1_1"/>
<dbReference type="InParanoid" id="Q09349"/>
<dbReference type="OMA" id="SNAFMTN"/>
<dbReference type="OrthoDB" id="20295at2759"/>
<dbReference type="BRENDA" id="2.3.2.27">
    <property type="organism ID" value="1045"/>
</dbReference>
<dbReference type="BRENDA" id="2.3.2.B12">
    <property type="organism ID" value="1045"/>
</dbReference>
<dbReference type="SignaLink" id="Q09349"/>
<dbReference type="UniPathway" id="UPA00143"/>
<dbReference type="PRO" id="PR:Q09349"/>
<dbReference type="Proteomes" id="UP000001940">
    <property type="component" value="Chromosome II"/>
</dbReference>
<dbReference type="Bgee" id="WBGene00006734">
    <property type="expression patterns" value="Expressed in adult organism and 3 other cell types or tissues"/>
</dbReference>
<dbReference type="GO" id="GO:0005737">
    <property type="term" value="C:cytoplasm"/>
    <property type="evidence" value="ECO:0000314"/>
    <property type="project" value="WormBase"/>
</dbReference>
<dbReference type="GO" id="GO:0031965">
    <property type="term" value="C:nuclear membrane"/>
    <property type="evidence" value="ECO:0007669"/>
    <property type="project" value="UniProtKB-SubCell"/>
</dbReference>
<dbReference type="GO" id="GO:0005730">
    <property type="term" value="C:nucleolus"/>
    <property type="evidence" value="ECO:0007669"/>
    <property type="project" value="UniProtKB-SubCell"/>
</dbReference>
<dbReference type="GO" id="GO:0005634">
    <property type="term" value="C:nucleus"/>
    <property type="evidence" value="ECO:0000314"/>
    <property type="project" value="WormBase"/>
</dbReference>
<dbReference type="GO" id="GO:0000151">
    <property type="term" value="C:ubiquitin ligase complex"/>
    <property type="evidence" value="ECO:0007669"/>
    <property type="project" value="InterPro"/>
</dbReference>
<dbReference type="GO" id="GO:0051087">
    <property type="term" value="F:protein-folding chaperone binding"/>
    <property type="evidence" value="ECO:0000353"/>
    <property type="project" value="WormBase"/>
</dbReference>
<dbReference type="GO" id="GO:0031625">
    <property type="term" value="F:ubiquitin protein ligase binding"/>
    <property type="evidence" value="ECO:0000353"/>
    <property type="project" value="WormBase"/>
</dbReference>
<dbReference type="GO" id="GO:0034450">
    <property type="term" value="F:ubiquitin-ubiquitin ligase activity"/>
    <property type="evidence" value="ECO:0000314"/>
    <property type="project" value="WormBase"/>
</dbReference>
<dbReference type="GO" id="GO:0036503">
    <property type="term" value="P:ERAD pathway"/>
    <property type="evidence" value="ECO:0000318"/>
    <property type="project" value="GO_Central"/>
</dbReference>
<dbReference type="GO" id="GO:0032436">
    <property type="term" value="P:positive regulation of proteasomal ubiquitin-dependent protein catabolic process"/>
    <property type="evidence" value="ECO:0000315"/>
    <property type="project" value="UniProtKB"/>
</dbReference>
<dbReference type="GO" id="GO:0051865">
    <property type="term" value="P:protein autoubiquitination"/>
    <property type="evidence" value="ECO:0000314"/>
    <property type="project" value="WormBase"/>
</dbReference>
<dbReference type="GO" id="GO:0035519">
    <property type="term" value="P:protein K29-linked ubiquitination"/>
    <property type="evidence" value="ECO:0000314"/>
    <property type="project" value="WormBase"/>
</dbReference>
<dbReference type="GO" id="GO:0070936">
    <property type="term" value="P:protein K48-linked ubiquitination"/>
    <property type="evidence" value="ECO:0000314"/>
    <property type="project" value="WormBase"/>
</dbReference>
<dbReference type="GO" id="GO:0000209">
    <property type="term" value="P:protein polyubiquitination"/>
    <property type="evidence" value="ECO:0000314"/>
    <property type="project" value="WormBase"/>
</dbReference>
<dbReference type="GO" id="GO:0016567">
    <property type="term" value="P:protein ubiquitination"/>
    <property type="evidence" value="ECO:0000314"/>
    <property type="project" value="WormBase"/>
</dbReference>
<dbReference type="GO" id="GO:0006511">
    <property type="term" value="P:ubiquitin-dependent protein catabolic process"/>
    <property type="evidence" value="ECO:0007669"/>
    <property type="project" value="InterPro"/>
</dbReference>
<dbReference type="CDD" id="cd16658">
    <property type="entry name" value="RING-Ubox_UBE4B"/>
    <property type="match status" value="1"/>
</dbReference>
<dbReference type="FunFam" id="3.30.40.10:FF:000055">
    <property type="entry name" value="Ubiquitin conjugation factor e4 a"/>
    <property type="match status" value="1"/>
</dbReference>
<dbReference type="Gene3D" id="3.30.40.10">
    <property type="entry name" value="Zinc/RING finger domain, C3HC4 (zinc finger)"/>
    <property type="match status" value="1"/>
</dbReference>
<dbReference type="InterPro" id="IPR019474">
    <property type="entry name" value="Ub_conjug_fac_E4_core"/>
</dbReference>
<dbReference type="InterPro" id="IPR045132">
    <property type="entry name" value="UBE4"/>
</dbReference>
<dbReference type="InterPro" id="IPR003613">
    <property type="entry name" value="Ubox_domain"/>
</dbReference>
<dbReference type="InterPro" id="IPR013083">
    <property type="entry name" value="Znf_RING/FYVE/PHD"/>
</dbReference>
<dbReference type="PANTHER" id="PTHR13931:SF2">
    <property type="entry name" value="UBIQUITIN CONJUGATION FACTOR E4 B"/>
    <property type="match status" value="1"/>
</dbReference>
<dbReference type="PANTHER" id="PTHR13931">
    <property type="entry name" value="UBIQUITINATION FACTOR E4"/>
    <property type="match status" value="1"/>
</dbReference>
<dbReference type="Pfam" id="PF04564">
    <property type="entry name" value="U-box"/>
    <property type="match status" value="1"/>
</dbReference>
<dbReference type="Pfam" id="PF10408">
    <property type="entry name" value="Ufd2P_core"/>
    <property type="match status" value="1"/>
</dbReference>
<dbReference type="SMART" id="SM00504">
    <property type="entry name" value="Ubox"/>
    <property type="match status" value="1"/>
</dbReference>
<dbReference type="SUPFAM" id="SSF57850">
    <property type="entry name" value="RING/U-box"/>
    <property type="match status" value="1"/>
</dbReference>
<dbReference type="PROSITE" id="PS51698">
    <property type="entry name" value="U_BOX"/>
    <property type="match status" value="1"/>
</dbReference>
<reference key="1">
    <citation type="journal article" date="1998" name="Science">
        <title>Genome sequence of the nematode C. elegans: a platform for investigating biology.</title>
        <authorList>
            <consortium name="The C. elegans sequencing consortium"/>
        </authorList>
    </citation>
    <scope>NUCLEOTIDE SEQUENCE [LARGE SCALE GENOMIC DNA]</scope>
    <source>
        <strain>Bristol N2</strain>
    </source>
</reference>
<reference key="2">
    <citation type="journal article" date="2004" name="Cell">
        <title>Regulation of the myosin-directed chaperone UNC-45 by a novel E3/E4-multiubiquitylation complex in C. elegans.</title>
        <authorList>
            <person name="Hoppe T."/>
            <person name="Cassata G."/>
            <person name="Barral J.M."/>
            <person name="Springer W."/>
            <person name="Hutagalung A.H."/>
            <person name="Epstein H.F."/>
            <person name="Baumeister R."/>
        </authorList>
    </citation>
    <scope>FUNCTION</scope>
    <scope>CATALYTIC ACTIVITY</scope>
    <scope>PATHWAY</scope>
    <scope>IDENTIFICATION IN A COMPLEX WITH CHN-1 AND UNC-45</scope>
    <scope>INTERACTION WITH CHN-1 AND UNC-45</scope>
    <scope>DEVELOPMENTAL STAGE</scope>
    <scope>DOMAIN</scope>
</reference>
<reference key="3">
    <citation type="journal article" date="2007" name="Nat. Cell Biol.">
        <title>The ubiquitin-selective chaperone CDC-48/p97 links myosin assembly to human myopathy.</title>
        <authorList>
            <person name="Janiesch P.C."/>
            <person name="Kim J."/>
            <person name="Mouysset J."/>
            <person name="Barikbin R."/>
            <person name="Lochmueller H."/>
            <person name="Cassata G."/>
            <person name="Krause S."/>
            <person name="Hoppe T."/>
        </authorList>
    </citation>
    <scope>FUNCTION</scope>
    <scope>IDENTIFICATION IN A COMPLEX WITH CDC-48.1; CHN-1 AND UNC-45</scope>
    <scope>INTERACTION WITH CDC-48.1; CDC-48.2; CHN-1 AND UNC-45</scope>
    <scope>DEVELOPMENTAL STAGE</scope>
    <scope>DISRUPTION PHENOTYPE</scope>
</reference>
<reference key="4">
    <citation type="journal article" date="2011" name="Nat. Cell Biol.">
        <title>The Machado-Joseph disease deubiquitylase ATX-3 couples longevity and proteostasis.</title>
        <authorList>
            <person name="Kuhlbrodt K."/>
            <person name="Janiesch P.C."/>
            <person name="Kevei E."/>
            <person name="Segref A."/>
            <person name="Barikbin R."/>
            <person name="Hoppe T."/>
        </authorList>
    </citation>
    <scope>IDENTIFICATION IN A COMPLEX WITH ATX-3 AND CDC-48.1</scope>
    <scope>INTERACTION WITH ATX-3; CDC-48.1 AND CDC-48.2</scope>
</reference>
<reference key="5">
    <citation type="journal article" date="2016" name="Nat. Struct. Mol. Biol.">
        <title>E4 ligase-specific ubiquitination hubs coordinate DNA double-strand-break repair and apoptosis.</title>
        <authorList>
            <person name="Ackermann L."/>
            <person name="Schell M."/>
            <person name="Pokrzywa W."/>
            <person name="Kevei E."/>
            <person name="Gartner A."/>
            <person name="Schumacher B."/>
            <person name="Hoppe T."/>
        </authorList>
    </citation>
    <scope>FUNCTION</scope>
    <scope>CATALYTIC ACTIVITY</scope>
    <scope>PATHWAY</scope>
    <scope>INTERACTION WITH CDC-48.1</scope>
    <scope>SUBCELLULAR LOCATION</scope>
    <scope>TISSUE SPECIFICITY</scope>
    <scope>DISRUPTION PHENOTYPE</scope>
    <scope>MUTAGENESIS OF CYS-448 AND PRO-951</scope>
</reference>
<reference key="6">
    <citation type="journal article" date="2018" name="Nat. Commun.">
        <title>UFD-2 is an adaptor-assisted E3 ligase targeting unfolded proteins.</title>
        <authorList>
            <person name="Hellerschmied D."/>
            <person name="Roessler M."/>
            <person name="Lehner A."/>
            <person name="Gazda L."/>
            <person name="Stejskal K."/>
            <person name="Imre R."/>
            <person name="Mechtler K."/>
            <person name="Dammermann A."/>
            <person name="Clausen T."/>
        </authorList>
    </citation>
    <scope>FUNCTION</scope>
    <scope>CATALYTIC ACTIVITY</scope>
    <scope>PATHWAY</scope>
    <scope>IDENTIFICATION IN A COMPLEX WITH UNC-45 AND UNC-54</scope>
    <scope>INTERACTION WITH UNC-45 AND UNC-54</scope>
</reference>
<organism>
    <name type="scientific">Caenorhabditis elegans</name>
    <dbReference type="NCBI Taxonomy" id="6239"/>
    <lineage>
        <taxon>Eukaryota</taxon>
        <taxon>Metazoa</taxon>
        <taxon>Ecdysozoa</taxon>
        <taxon>Nematoda</taxon>
        <taxon>Chromadorea</taxon>
        <taxon>Rhabditida</taxon>
        <taxon>Rhabditina</taxon>
        <taxon>Rhabditomorpha</taxon>
        <taxon>Rhabditoidea</taxon>
        <taxon>Rhabditidae</taxon>
        <taxon>Peloderinae</taxon>
        <taxon>Caenorhabditis</taxon>
    </lineage>
</organism>
<proteinExistence type="evidence at protein level"/>
<feature type="chain" id="PRO_0000194995" description="Ubiquitin conjugation factor E4 ufd-2">
    <location>
        <begin position="1"/>
        <end position="984"/>
    </location>
</feature>
<feature type="domain" description="U-box" evidence="1">
    <location>
        <begin position="909"/>
        <end position="982"/>
    </location>
</feature>
<feature type="splice variant" id="VSP_059812" description="In isoform a and isoform c." evidence="8">
    <location>
        <begin position="20"/>
        <end position="23"/>
    </location>
</feature>
<feature type="splice variant" id="VSP_059813" description="In isoform c.">
    <location>
        <position position="436"/>
    </location>
</feature>
<feature type="mutagenesis site" description="Loss of interaction with cdc-48.1. Constitutive localization to foci. Decrease in the number of apoptotic corpses in the germline in response to ionizing radiation-mediated DNA damage. No defect in catalytic activity." evidence="5">
    <original>C</original>
    <variation>Y</variation>
    <location>
        <position position="448"/>
    </location>
</feature>
<feature type="mutagenesis site" description="Loss of E3 ubiquitin protein ligase activity. Decrease in the number of apoptotic corpses in the germline in response to ionizing radiation-mediated DNA damage. Does not affect foci localization in response to ionizing radiation-mediated DNA damage. Does not affect recruitment of cdc-48, atx-3 or proteasome to foci. Does not affect interaction with cdc-48.1." evidence="5">
    <original>P</original>
    <variation>A</variation>
    <location>
        <position position="951"/>
    </location>
</feature>
<protein>
    <recommendedName>
        <fullName evidence="8">Ubiquitin conjugation factor E4 ufd-2</fullName>
        <ecNumber evidence="2 5 6">2.3.2.27</ecNumber>
    </recommendedName>
    <alternativeName>
        <fullName evidence="8">E4 ubiquitin-protein ligase ufd-2</fullName>
    </alternativeName>
    <alternativeName>
        <fullName>RING-type E3 ubiquitin transferase E4</fullName>
    </alternativeName>
    <alternativeName>
        <fullName evidence="10">Ubiquitin fusion degradation protein 2</fullName>
    </alternativeName>
</protein>
<gene>
    <name evidence="7 10" type="primary">ufd-2</name>
    <name evidence="10" type="ORF">T05H10.5</name>
</gene>
<name>UBE4_CAEEL</name>
<keyword id="KW-0025">Alternative splicing</keyword>
<keyword id="KW-0963">Cytoplasm</keyword>
<keyword id="KW-0472">Membrane</keyword>
<keyword id="KW-0539">Nucleus</keyword>
<keyword id="KW-1185">Reference proteome</keyword>
<keyword id="KW-0808">Transferase</keyword>
<keyword id="KW-0833">Ubl conjugation pathway</keyword>
<comment type="function">
    <text evidence="2 3 5 6">Acts as an E4 ubiquitin ligase mediating the assembly of polyubiquitin chains on substrates ubiquitinated by another E3 ubiquitin ligase (PubMed:27669035). The elongation of preexisting ubiquitin chains preferentially targets ubiquitin 'Lys-29' and 'Lys-48' residues (PubMed:27669035). Also functions as an E3 ligase in conjunction with specific E1 and E2 ligases (PubMed:15294159, PubMed:27669035, PubMed:29396393). Probably by regulating protein ubiquitination at DNA damage repair sites, coordinates DNA double-strand-break repair and apoptosis in the germline (PubMed:27669035). Required for germline apoptosis in response to DNA damage downstream of cep-1 (PubMed:27669035). Involved in the resolution of DNA-repair sites by promoting the release of rad-51 from DNA damage foci (PubMed:27669035). In association with protein-ligase chn-1, acts as an E3/E4 ligase to poly-ubiquitinate lysine residues in the UCS domain of myosin chaperone unc-45 (PubMed:15294159, PubMed:29396393). By targeting myosin chaperone unc-45 for proteasomal degradation, regulates myosin assembly in body wall muscles in association with cdc-48.1 and chn-1 (PubMed:15294159, PubMed:17369820). However, in a contrasting study, acts as an E3 ligase, independently of chn-1, to poly-ubiquitinate unc-45 without promoting unc-45 proteasomal degradation (PubMed:29396393). Instead, uses unc-45 as an adapter protein to recruit and poly-ubiquitinate unfolded myosin heavy chain B unc-54 (PubMed:29396393).</text>
</comment>
<comment type="catalytic activity">
    <reaction evidence="2 5 6">
        <text>S-ubiquitinyl-[E2 ubiquitin-conjugating enzyme]-L-cysteine + [acceptor protein]-L-lysine = [E2 ubiquitin-conjugating enzyme]-L-cysteine + N(6)-ubiquitinyl-[acceptor protein]-L-lysine.</text>
        <dbReference type="EC" id="2.3.2.27"/>
    </reaction>
</comment>
<comment type="pathway">
    <text evidence="2 5 6">Protein modification; protein ubiquitination.</text>
</comment>
<comment type="subunit">
    <text evidence="2 3 4 5 6">Forms a complex composed of deubiquitinating enzyme atx-3, E4 ubiquitin-protein ligase ufd-2 and cdc-48.1; within the complex interacts with atx-3 and cdc-48.1 (via DDDLYN motif) (PubMed:21317884, PubMed:27669035). Forms a complex composed of cdc-48.1, myosin chaperone unc-45, ubiquitin-protein ligases ufd-2 and chn-1; the complex targets myosin chaperone unc-45 for proteasomal degradation; within the complex interacts with cdc-48.1 (via DDDLYN motif), chn-1 and unc-45 (PubMed:15294159, PubMed:17369820, PubMed:27669035). Forms a complex composed of unc-45 and myosin heavy chain B unc-54; the complex targets unfolded unc-54 for proteasomal degradation; within the complex interacts with unc-45 (via TPR domain) and unc-54 (PubMed:29396393). Interacts with cdc-48.2 (via DDDLYN motif) (PubMed:17369820, PubMed:21317884).</text>
</comment>
<comment type="interaction">
    <interactant intactId="EBI-317233">
        <id>Q09349</id>
    </interactant>
    <interactant intactId="EBI-2417964">
        <id>P90879</id>
        <label>CELE_F49C12.9</label>
    </interactant>
    <organismsDiffer>false</organismsDiffer>
    <experiments>4</experiments>
</comment>
<comment type="subcellular location">
    <subcellularLocation>
        <location evidence="5">Cytoplasm</location>
    </subcellularLocation>
    <subcellularLocation>
        <location evidence="5">Nucleus membrane</location>
        <topology evidence="5">Peripheral membrane protein</topology>
        <orientation evidence="5">Cytoplasmic side</orientation>
    </subcellularLocation>
    <subcellularLocation>
        <location evidence="5">Nucleus</location>
        <location evidence="5">Nucleolus</location>
    </subcellularLocation>
    <text evidence="5">Localizes to germline syncytium. In the late pachytene, accumulates at the nuclear periphery forming a ring. Following ionizing radiation-mediated DNA damage, localizes to foci within nucleoli where it colocalizes with cdc-48.1 and/or cdc-48.2, atx-3, proteasome alpha subunit and ubiquitinated proteins. Localization to foci is ubiquitin-dependent and regulated by E3 ligase hecd-1 and deubiquitinating enzyme atx-3. ufd-2 foci are formed following the initiation of homologous recombination (HR) and persist until HR is completed. ufd-2 foci are also formed upon cep-1 activation.</text>
</comment>
<comment type="alternative products">
    <event type="alternative splicing"/>
    <isoform>
        <id>Q09349-1</id>
        <name evidence="10">b</name>
        <sequence type="displayed"/>
    </isoform>
    <isoform>
        <id>Q09349-3</id>
        <name evidence="9">a</name>
        <sequence type="described" ref="VSP_059812"/>
    </isoform>
    <isoform>
        <id>Q09349-4</id>
        <name evidence="11">c</name>
        <sequence type="described" ref="VSP_059812 VSP_059813"/>
    </isoform>
</comment>
<comment type="tissue specificity">
    <text evidence="5">Expressed in the germline (at protein level).</text>
</comment>
<comment type="developmental stage">
    <text evidence="2 3">Expressed in young adults but not in larvae (PubMed:17369820). Expressed in pharyngeal muscles and in body wall muscles in L2 and L4 larvae, respectively (PubMed:15294159).</text>
</comment>
<comment type="domain">
    <text evidence="2">The U-box domain is required for the ubiquitin protein ligase activity.</text>
</comment>
<comment type="disruption phenotype">
    <text evidence="3 5">Number of germline apoptotic corpses is decreased in response to ionizing radiation-mediated DNA damage but not following UV-induced DNA damage (PubMed:27669035). Delay in the dissociation of rad-51 from DNA damage foci (PubMed:27669035). In a hecd-1 (tm2371) mutant background, the decrease in the number of germline apoptotic corpses is more severe (PubMed:27669035). In an atx-3 (gk193) mutant background, prevents the increase in the number of germline apoptotic corpses (PubMed:27669035). RNAi-mediated knockdown in an unc-45 (m94) mutant background restores motility (PubMed:17369820).</text>
</comment>
<comment type="similarity">
    <text evidence="8">Belongs to the ubiquitin conjugation factor E4 family.</text>
</comment>
<comment type="caution">
    <text evidence="2 3 6">The role of chn-1 in ufd-2-mediated unc-45 ubiquitination is controversial. While two studies showed that unc-45 ubiquitination by ufd-2 requires ubiquitin-protein ligase chn-1, one study showed that ufd-2 ubiquitinates unc-45 independently of chn-1.</text>
</comment>
<sequence>MIEDEKAGLQPMDISDASVFFFQADVESKDFLTSLFDCEGKSDDRMLRYADAIIDVQNLNFDVSPQCLQSNIAEIITKFVLLSQDGSRRGLSRSFNFIDPDIIAGCREEDAIEFLLINFVRCHHELGKSGTSNCYKKTLESTRKAVFSVFVMIQRGYLESQLRSQHASLVFTKRLLEDTVSNVFLRTLVEYLASTDECDEDAITETFNPIFGILRSGIICQRFEDNKDEIVRQILRVMNLLLSIRLPSNGPRPLSNLLVNREDFLPTPSEKIQGREFGLMSFLGPFFSYGLESSARRPNHRVFVDCEEDARKYDGSVNTEQKLYFQRMDPIRTMLHQLMLPLASDQGSRNKTLRWIATIISTNDIRTRSHYDPSDVLCDHYMTNFLSVMYMFSEKIDLSKIIVDYPFLPSSLINISKETRLKMDESGAVAFASQFADRPDEYHFSTVCFFLTIAAQRLVIPPLMNQISEYSRHLKELKHKINALKEKLNTVSGFERAEVEKKLNYETEHWKLMSRHLLCVKTQAQDPALMASSMDFVDKQMKFILNLLCDNLDLLGDDSQLPTEVSQMFCALPEYFLEDALDFYIFAISNGMKLLMERNADWISRLTVLFTQYHYIKSPFLVSKLVRVLSSIQPPLWFNVVRLRMAQENLLMCMIKFYSDFEDNGDFYEKFNVRGNIQYMLEKMEEDMFYKGKFMDMARECGAEFIRFVNMVINDATWCIDESLSGLKSIHDVEKKMANKVEWDNTDQEIRNQDLGVYEEAKRKVKGWLGTAKSNLKLLLSITVNSPEPFRTPVLGERLAAMLNHNLSQLIGSKASELKVKDPRSYGWEPREFVSLLISIYLKLNMPAFVKYIAYDERTYSPEFFHNAIECMRKNSIVGFSQLESFEHLAEDVKKEYEAKAELEEEYDDVPEEFKDPIMDAIMVDPVKLPSGHVMDRAVIERHLLSTPNNPFNRAPLSHNELSPDSELKAKIQEWICQKRNSKK</sequence>